<proteinExistence type="inferred from homology"/>
<accession>Q6NJD7</accession>
<evidence type="ECO:0000255" key="1">
    <source>
        <dbReference type="HAMAP-Rule" id="MF_00480"/>
    </source>
</evidence>
<evidence type="ECO:0000305" key="2"/>
<name>RS7_CORDI</name>
<keyword id="KW-1185">Reference proteome</keyword>
<keyword id="KW-0687">Ribonucleoprotein</keyword>
<keyword id="KW-0689">Ribosomal protein</keyword>
<keyword id="KW-0694">RNA-binding</keyword>
<keyword id="KW-0699">rRNA-binding</keyword>
<keyword id="KW-0820">tRNA-binding</keyword>
<reference key="1">
    <citation type="journal article" date="2003" name="Nucleic Acids Res.">
        <title>The complete genome sequence and analysis of Corynebacterium diphtheriae NCTC13129.</title>
        <authorList>
            <person name="Cerdeno-Tarraga A.-M."/>
            <person name="Efstratiou A."/>
            <person name="Dover L.G."/>
            <person name="Holden M.T.G."/>
            <person name="Pallen M.J."/>
            <person name="Bentley S.D."/>
            <person name="Besra G.S."/>
            <person name="Churcher C.M."/>
            <person name="James K.D."/>
            <person name="De Zoysa A."/>
            <person name="Chillingworth T."/>
            <person name="Cronin A."/>
            <person name="Dowd L."/>
            <person name="Feltwell T."/>
            <person name="Hamlin N."/>
            <person name="Holroyd S."/>
            <person name="Jagels K."/>
            <person name="Moule S."/>
            <person name="Quail M.A."/>
            <person name="Rabbinowitsch E."/>
            <person name="Rutherford K.M."/>
            <person name="Thomson N.R."/>
            <person name="Unwin L."/>
            <person name="Whitehead S."/>
            <person name="Barrell B.G."/>
            <person name="Parkhill J."/>
        </authorList>
    </citation>
    <scope>NUCLEOTIDE SEQUENCE [LARGE SCALE GENOMIC DNA]</scope>
    <source>
        <strain>ATCC 700971 / NCTC 13129 / Biotype gravis</strain>
    </source>
</reference>
<dbReference type="EMBL" id="BX248355">
    <property type="protein sequence ID" value="CAE48972.1"/>
    <property type="molecule type" value="Genomic_DNA"/>
</dbReference>
<dbReference type="RefSeq" id="WP_010934326.1">
    <property type="nucleotide sequence ID" value="NC_002935.2"/>
</dbReference>
<dbReference type="SMR" id="Q6NJD7"/>
<dbReference type="STRING" id="257309.DIP0468"/>
<dbReference type="KEGG" id="cdi:DIP0468"/>
<dbReference type="HOGENOM" id="CLU_072226_1_1_11"/>
<dbReference type="Proteomes" id="UP000002198">
    <property type="component" value="Chromosome"/>
</dbReference>
<dbReference type="GO" id="GO:0015935">
    <property type="term" value="C:small ribosomal subunit"/>
    <property type="evidence" value="ECO:0007669"/>
    <property type="project" value="InterPro"/>
</dbReference>
<dbReference type="GO" id="GO:0019843">
    <property type="term" value="F:rRNA binding"/>
    <property type="evidence" value="ECO:0007669"/>
    <property type="project" value="UniProtKB-UniRule"/>
</dbReference>
<dbReference type="GO" id="GO:0003735">
    <property type="term" value="F:structural constituent of ribosome"/>
    <property type="evidence" value="ECO:0007669"/>
    <property type="project" value="InterPro"/>
</dbReference>
<dbReference type="GO" id="GO:0000049">
    <property type="term" value="F:tRNA binding"/>
    <property type="evidence" value="ECO:0007669"/>
    <property type="project" value="UniProtKB-UniRule"/>
</dbReference>
<dbReference type="GO" id="GO:0006412">
    <property type="term" value="P:translation"/>
    <property type="evidence" value="ECO:0007669"/>
    <property type="project" value="UniProtKB-UniRule"/>
</dbReference>
<dbReference type="CDD" id="cd14869">
    <property type="entry name" value="uS7_Bacteria"/>
    <property type="match status" value="1"/>
</dbReference>
<dbReference type="FunFam" id="1.10.455.10:FF:000001">
    <property type="entry name" value="30S ribosomal protein S7"/>
    <property type="match status" value="1"/>
</dbReference>
<dbReference type="Gene3D" id="1.10.455.10">
    <property type="entry name" value="Ribosomal protein S7 domain"/>
    <property type="match status" value="1"/>
</dbReference>
<dbReference type="HAMAP" id="MF_00480_B">
    <property type="entry name" value="Ribosomal_uS7_B"/>
    <property type="match status" value="1"/>
</dbReference>
<dbReference type="InterPro" id="IPR000235">
    <property type="entry name" value="Ribosomal_uS7"/>
</dbReference>
<dbReference type="InterPro" id="IPR005717">
    <property type="entry name" value="Ribosomal_uS7_bac/org-type"/>
</dbReference>
<dbReference type="InterPro" id="IPR020606">
    <property type="entry name" value="Ribosomal_uS7_CS"/>
</dbReference>
<dbReference type="InterPro" id="IPR023798">
    <property type="entry name" value="Ribosomal_uS7_dom"/>
</dbReference>
<dbReference type="InterPro" id="IPR036823">
    <property type="entry name" value="Ribosomal_uS7_dom_sf"/>
</dbReference>
<dbReference type="NCBIfam" id="TIGR01029">
    <property type="entry name" value="rpsG_bact"/>
    <property type="match status" value="1"/>
</dbReference>
<dbReference type="PANTHER" id="PTHR11205">
    <property type="entry name" value="RIBOSOMAL PROTEIN S7"/>
    <property type="match status" value="1"/>
</dbReference>
<dbReference type="Pfam" id="PF00177">
    <property type="entry name" value="Ribosomal_S7"/>
    <property type="match status" value="1"/>
</dbReference>
<dbReference type="PIRSF" id="PIRSF002122">
    <property type="entry name" value="RPS7p_RPS7a_RPS5e_RPS7o"/>
    <property type="match status" value="1"/>
</dbReference>
<dbReference type="SUPFAM" id="SSF47973">
    <property type="entry name" value="Ribosomal protein S7"/>
    <property type="match status" value="1"/>
</dbReference>
<dbReference type="PROSITE" id="PS00052">
    <property type="entry name" value="RIBOSOMAL_S7"/>
    <property type="match status" value="1"/>
</dbReference>
<gene>
    <name evidence="1" type="primary">rpsG</name>
    <name type="ordered locus">DIP0468</name>
</gene>
<organism>
    <name type="scientific">Corynebacterium diphtheriae (strain ATCC 700971 / NCTC 13129 / Biotype gravis)</name>
    <dbReference type="NCBI Taxonomy" id="257309"/>
    <lineage>
        <taxon>Bacteria</taxon>
        <taxon>Bacillati</taxon>
        <taxon>Actinomycetota</taxon>
        <taxon>Actinomycetes</taxon>
        <taxon>Mycobacteriales</taxon>
        <taxon>Corynebacteriaceae</taxon>
        <taxon>Corynebacterium</taxon>
    </lineage>
</organism>
<sequence length="155" mass="17464">MRKNAAPKRPIVKDPVYGSEVVTQLVNKVLLDGKKSTAERIVYGALDKCKEKTGIDPVLTLEKALGNIKPDLEVRSRRVGGATYQVPVEVRPARANTLALRWLVTFTRQRRENTMIERLANEILDAANGLGASVKRREDTHKMAEANRAFAHYRW</sequence>
<protein>
    <recommendedName>
        <fullName evidence="1">Small ribosomal subunit protein uS7</fullName>
    </recommendedName>
    <alternativeName>
        <fullName evidence="2">30S ribosomal protein S7</fullName>
    </alternativeName>
</protein>
<feature type="chain" id="PRO_0000124252" description="Small ribosomal subunit protein uS7">
    <location>
        <begin position="1"/>
        <end position="155"/>
    </location>
</feature>
<comment type="function">
    <text evidence="1">One of the primary rRNA binding proteins, it binds directly to 16S rRNA where it nucleates assembly of the head domain of the 30S subunit. Is located at the subunit interface close to the decoding center, probably blocks exit of the E-site tRNA.</text>
</comment>
<comment type="subunit">
    <text evidence="1">Part of the 30S ribosomal subunit. Contacts proteins S9 and S11.</text>
</comment>
<comment type="similarity">
    <text evidence="1">Belongs to the universal ribosomal protein uS7 family.</text>
</comment>